<feature type="chain" id="PRO_0000051128" description="p21-activated protein kinase-interacting protein 1-like">
    <location>
        <begin position="1"/>
        <end position="368"/>
    </location>
</feature>
<feature type="repeat" description="WD 1">
    <location>
        <begin position="45"/>
        <end position="82"/>
    </location>
</feature>
<feature type="repeat" description="WD 2">
    <location>
        <begin position="85"/>
        <end position="123"/>
    </location>
</feature>
<feature type="repeat" description="WD 3">
    <location>
        <begin position="126"/>
        <end position="165"/>
    </location>
</feature>
<feature type="repeat" description="WD 4">
    <location>
        <begin position="207"/>
        <end position="245"/>
    </location>
</feature>
<feature type="repeat" description="WD 5">
    <location>
        <begin position="248"/>
        <end position="289"/>
    </location>
</feature>
<feature type="sequence conflict" description="In Ref. 2; AAH49528." evidence="2" ref="2">
    <original>G</original>
    <variation>E</variation>
    <location>
        <position position="9"/>
    </location>
</feature>
<feature type="sequence conflict" description="In Ref. 2; AAH66416." evidence="2" ref="2">
    <original>S</original>
    <variation>N</variation>
    <location>
        <position position="56"/>
    </location>
</feature>
<feature type="sequence conflict" description="In Ref. 2; AAH49528." evidence="2" ref="2">
    <original>Y</original>
    <variation>C</variation>
    <location>
        <position position="72"/>
    </location>
</feature>
<accession>Q6TNS2</accession>
<accession>Q6NYY5</accession>
<accession>Q7ZW90</accession>
<keyword id="KW-0539">Nucleus</keyword>
<keyword id="KW-1185">Reference proteome</keyword>
<keyword id="KW-0677">Repeat</keyword>
<keyword id="KW-0690">Ribosome biogenesis</keyword>
<keyword id="KW-0734">Signal transduction inhibitor</keyword>
<keyword id="KW-0853">WD repeat</keyword>
<organism>
    <name type="scientific">Danio rerio</name>
    <name type="common">Zebrafish</name>
    <name type="synonym">Brachydanio rerio</name>
    <dbReference type="NCBI Taxonomy" id="7955"/>
    <lineage>
        <taxon>Eukaryota</taxon>
        <taxon>Metazoa</taxon>
        <taxon>Chordata</taxon>
        <taxon>Craniata</taxon>
        <taxon>Vertebrata</taxon>
        <taxon>Euteleostomi</taxon>
        <taxon>Actinopterygii</taxon>
        <taxon>Neopterygii</taxon>
        <taxon>Teleostei</taxon>
        <taxon>Ostariophysi</taxon>
        <taxon>Cypriniformes</taxon>
        <taxon>Danionidae</taxon>
        <taxon>Danioninae</taxon>
        <taxon>Danio</taxon>
    </lineage>
</organism>
<proteinExistence type="evidence at transcript level"/>
<evidence type="ECO:0000250" key="1">
    <source>
        <dbReference type="UniProtKB" id="Q9NWT1"/>
    </source>
</evidence>
<evidence type="ECO:0000305" key="2"/>
<dbReference type="EMBL" id="AY391445">
    <property type="protein sequence ID" value="AAQ91257.1"/>
    <property type="molecule type" value="mRNA"/>
</dbReference>
<dbReference type="EMBL" id="BC049528">
    <property type="protein sequence ID" value="AAH49528.2"/>
    <property type="molecule type" value="mRNA"/>
</dbReference>
<dbReference type="EMBL" id="BC066416">
    <property type="protein sequence ID" value="AAH66416.2"/>
    <property type="molecule type" value="mRNA"/>
</dbReference>
<dbReference type="RefSeq" id="NP_957239.2">
    <property type="nucleotide sequence ID" value="NM_200945.2"/>
</dbReference>
<dbReference type="SMR" id="Q6TNS2"/>
<dbReference type="FunCoup" id="Q6TNS2">
    <property type="interactions" value="2050"/>
</dbReference>
<dbReference type="STRING" id="7955.ENSDARP00000065337"/>
<dbReference type="PaxDb" id="7955-ENSDARP00000065337"/>
<dbReference type="Ensembl" id="ENSDART00000065338">
    <property type="protein sequence ID" value="ENSDARP00000065337"/>
    <property type="gene ID" value="ENSDARG00000044488"/>
</dbReference>
<dbReference type="GeneID" id="336470"/>
<dbReference type="KEGG" id="dre:336470"/>
<dbReference type="AGR" id="ZFIN:ZDB-GENE-030131-8414"/>
<dbReference type="CTD" id="55003"/>
<dbReference type="ZFIN" id="ZDB-GENE-030131-8414">
    <property type="gene designation" value="pak1ip1"/>
</dbReference>
<dbReference type="eggNOG" id="KOG0294">
    <property type="taxonomic scope" value="Eukaryota"/>
</dbReference>
<dbReference type="HOGENOM" id="CLU_031466_2_0_1"/>
<dbReference type="InParanoid" id="Q6TNS2"/>
<dbReference type="OMA" id="GYIKMWR"/>
<dbReference type="OrthoDB" id="308449at2759"/>
<dbReference type="PhylomeDB" id="Q6TNS2"/>
<dbReference type="TreeFam" id="TF326684"/>
<dbReference type="PRO" id="PR:Q6TNS2"/>
<dbReference type="Proteomes" id="UP000000437">
    <property type="component" value="Chromosome 24"/>
</dbReference>
<dbReference type="Bgee" id="ENSDARG00000044488">
    <property type="expression patterns" value="Expressed in somite and 29 other cell types or tissues"/>
</dbReference>
<dbReference type="GO" id="GO:0005730">
    <property type="term" value="C:nucleolus"/>
    <property type="evidence" value="ECO:0000318"/>
    <property type="project" value="GO_Central"/>
</dbReference>
<dbReference type="GO" id="GO:0004860">
    <property type="term" value="F:protein kinase inhibitor activity"/>
    <property type="evidence" value="ECO:0000318"/>
    <property type="project" value="GO_Central"/>
</dbReference>
<dbReference type="GO" id="GO:0000463">
    <property type="term" value="P:maturation of LSU-rRNA from tricistronic rRNA transcript (SSU-rRNA, 5.8S rRNA, LSU-rRNA)"/>
    <property type="evidence" value="ECO:0000318"/>
    <property type="project" value="GO_Central"/>
</dbReference>
<dbReference type="GO" id="GO:0009968">
    <property type="term" value="P:negative regulation of signal transduction"/>
    <property type="evidence" value="ECO:0007669"/>
    <property type="project" value="UniProtKB-KW"/>
</dbReference>
<dbReference type="GO" id="GO:0042273">
    <property type="term" value="P:ribosomal large subunit biogenesis"/>
    <property type="evidence" value="ECO:0000250"/>
    <property type="project" value="UniProtKB"/>
</dbReference>
<dbReference type="CDD" id="cd00200">
    <property type="entry name" value="WD40"/>
    <property type="match status" value="1"/>
</dbReference>
<dbReference type="FunFam" id="2.130.10.10:FF:000424">
    <property type="entry name" value="p21-activated protein kinase-interacting protein 1-like"/>
    <property type="match status" value="1"/>
</dbReference>
<dbReference type="Gene3D" id="2.130.10.10">
    <property type="entry name" value="YVTN repeat-like/Quinoprotein amine dehydrogenase"/>
    <property type="match status" value="2"/>
</dbReference>
<dbReference type="InterPro" id="IPR051959">
    <property type="entry name" value="PAK1-Kinase_Regulator"/>
</dbReference>
<dbReference type="InterPro" id="IPR015943">
    <property type="entry name" value="WD40/YVTN_repeat-like_dom_sf"/>
</dbReference>
<dbReference type="InterPro" id="IPR019775">
    <property type="entry name" value="WD40_repeat_CS"/>
</dbReference>
<dbReference type="InterPro" id="IPR036322">
    <property type="entry name" value="WD40_repeat_dom_sf"/>
</dbReference>
<dbReference type="InterPro" id="IPR001680">
    <property type="entry name" value="WD40_rpt"/>
</dbReference>
<dbReference type="PANTHER" id="PTHR44675:SF1">
    <property type="entry name" value="P21-ACTIVATED PROTEIN KINASE-INTERACTING PROTEIN 1"/>
    <property type="match status" value="1"/>
</dbReference>
<dbReference type="PANTHER" id="PTHR44675">
    <property type="entry name" value="PAK1 INTERACTING PROTEIN 1"/>
    <property type="match status" value="1"/>
</dbReference>
<dbReference type="Pfam" id="PF00400">
    <property type="entry name" value="WD40"/>
    <property type="match status" value="5"/>
</dbReference>
<dbReference type="SMART" id="SM00320">
    <property type="entry name" value="WD40"/>
    <property type="match status" value="5"/>
</dbReference>
<dbReference type="SUPFAM" id="SSF50978">
    <property type="entry name" value="WD40 repeat-like"/>
    <property type="match status" value="1"/>
</dbReference>
<dbReference type="PROSITE" id="PS00678">
    <property type="entry name" value="WD_REPEATS_1"/>
    <property type="match status" value="1"/>
</dbReference>
<dbReference type="PROSITE" id="PS50082">
    <property type="entry name" value="WD_REPEATS_2"/>
    <property type="match status" value="2"/>
</dbReference>
<dbReference type="PROSITE" id="PS50294">
    <property type="entry name" value="WD_REPEATS_REGION"/>
    <property type="match status" value="1"/>
</dbReference>
<sequence length="368" mass="40901">MSECFTVMGDHIELVAGCYEQIVFGYRVCPADEEWTIEPTFTHHAHTASLNAVSSSNQFIATGSKDETIQLYDMCKKTEHGALLHHDGTISCLEFYGTSHLLSGGQDGLICVWSTKKWECLKTIRAHKGQVTSLSVHPSGKLALSVGTDKTLRTWNLIEGRSAFIKNIKQNAEIVLWSPDGDKYAVVVNDKVDIYTLDSATIIGTIAFTKRISCLKFLKNSLLAVGGDDESVRIYDVTSQKCVCEFKAHENRVKAIESFMKDDFCVLVTASNDGFIKLWKLNLESIESPTLLGQLNTTARLTCLCVWMPGETKETAEQPAQATTSEDVLDPLVPVRSKRVRILGEEVIMEDEKGSKTQGKKKKRQKVQ</sequence>
<name>PK1IP_DANRE</name>
<protein>
    <recommendedName>
        <fullName>p21-activated protein kinase-interacting protein 1-like</fullName>
    </recommendedName>
    <alternativeName>
        <fullName>PAK1-interacting protein 1-like</fullName>
    </alternativeName>
</protein>
<reference key="1">
    <citation type="journal article" date="2004" name="Proc. Natl. Acad. Sci. U.S.A.">
        <title>Hematopoietic gene expression profile in zebrafish kidney marrow.</title>
        <authorList>
            <person name="Song H.-D."/>
            <person name="Sun X.-J."/>
            <person name="Deng M."/>
            <person name="Zhang G.-W."/>
            <person name="Zhou Y."/>
            <person name="Wu X.-Y."/>
            <person name="Sheng Y."/>
            <person name="Chen Y."/>
            <person name="Ruan Z."/>
            <person name="Jiang C.-L."/>
            <person name="Fan H.-Y."/>
            <person name="Zon L.I."/>
            <person name="Kanki J.P."/>
            <person name="Liu T.X."/>
            <person name="Look A.T."/>
            <person name="Chen Z."/>
        </authorList>
    </citation>
    <scope>NUCLEOTIDE SEQUENCE [LARGE SCALE MRNA]</scope>
    <source>
        <tissue>Kidney marrow</tissue>
    </source>
</reference>
<reference key="2">
    <citation type="submission" date="2004-07" db="EMBL/GenBank/DDBJ databases">
        <authorList>
            <consortium name="NIH - Zebrafish Gene Collection (ZGC) project"/>
        </authorList>
    </citation>
    <scope>NUCLEOTIDE SEQUENCE [LARGE SCALE MRNA]</scope>
    <source>
        <tissue>Kidney</tissue>
    </source>
</reference>
<gene>
    <name type="primary">pak1ip1</name>
    <name type="ORF">zgc:56683</name>
</gene>
<comment type="function">
    <text evidence="1">Negatively regulates the PAK1 kinase. PAK1 is a member of the PAK kinase family, which has been shown to play a positive role in the regulation of signaling pathways involving MAPK8 and RELA. PAK1 exists as an inactive homodimer, which is activated by binding of small GTPases such as CDC42 to an N-terminal regulatory domain. PAK1IP1 also binds to the N-terminus of PAK1, and inhibits the specific activation of PAK1 by CDC42. May be involved in ribosomal large subunit assembly.</text>
</comment>
<comment type="subcellular location">
    <subcellularLocation>
        <location evidence="1">Nucleus</location>
        <location evidence="1">Nucleolus</location>
    </subcellularLocation>
</comment>